<name>MDH_ACIB5</name>
<protein>
    <recommendedName>
        <fullName evidence="1">Malate dehydrogenase</fullName>
        <ecNumber evidence="1">1.1.1.37</ecNumber>
    </recommendedName>
</protein>
<gene>
    <name evidence="1" type="primary">mdh</name>
    <name type="ordered locus">AB57_3474</name>
</gene>
<feature type="chain" id="PRO_1000191603" description="Malate dehydrogenase">
    <location>
        <begin position="1"/>
        <end position="328"/>
    </location>
</feature>
<feature type="active site" description="Proton acceptor" evidence="1">
    <location>
        <position position="189"/>
    </location>
</feature>
<feature type="binding site" evidence="1">
    <location>
        <begin position="11"/>
        <end position="17"/>
    </location>
    <ligand>
        <name>NAD(+)</name>
        <dbReference type="ChEBI" id="CHEBI:57540"/>
    </ligand>
</feature>
<feature type="binding site" evidence="1">
    <location>
        <position position="94"/>
    </location>
    <ligand>
        <name>substrate</name>
    </ligand>
</feature>
<feature type="binding site" evidence="1">
    <location>
        <position position="100"/>
    </location>
    <ligand>
        <name>substrate</name>
    </ligand>
</feature>
<feature type="binding site" evidence="1">
    <location>
        <position position="107"/>
    </location>
    <ligand>
        <name>NAD(+)</name>
        <dbReference type="ChEBI" id="CHEBI:57540"/>
    </ligand>
</feature>
<feature type="binding site" evidence="1">
    <location>
        <position position="114"/>
    </location>
    <ligand>
        <name>NAD(+)</name>
        <dbReference type="ChEBI" id="CHEBI:57540"/>
    </ligand>
</feature>
<feature type="binding site" evidence="1">
    <location>
        <begin position="131"/>
        <end position="133"/>
    </location>
    <ligand>
        <name>NAD(+)</name>
        <dbReference type="ChEBI" id="CHEBI:57540"/>
    </ligand>
</feature>
<feature type="binding site" evidence="1">
    <location>
        <position position="133"/>
    </location>
    <ligand>
        <name>substrate</name>
    </ligand>
</feature>
<feature type="binding site" evidence="1">
    <location>
        <position position="164"/>
    </location>
    <ligand>
        <name>substrate</name>
    </ligand>
</feature>
<keyword id="KW-0520">NAD</keyword>
<keyword id="KW-0560">Oxidoreductase</keyword>
<keyword id="KW-0816">Tricarboxylic acid cycle</keyword>
<sequence length="328" mass="35323">MKQPVRVAVTGAAGQIGYSLLFRIASGEMLGKDQPVILQLLEVPVEKAQQALKGVMMELDDCAFPLLAGMIGTDDPKVAFKDADYALLVGSRPRGPGMERADLLKVNGEIFIGQGQALNEVASRDVKVLVVGNPANTNAYIAMKSAPDLPAKNFTAMLRLDHNRALTQVAQKAGVAVADIEKLTVWGNHSPTMYADYRFATANGESLKDKINDPAWNKDVFLPTVGKRGAAIIEARGLSSAASAANAAIDHMRDWALGTNGKWVTMGVPSDGSYGIPEGVMFGFPVTTENGEYKIVQGLEIDEFSRERINFTLNELEEERAAIADMVK</sequence>
<dbReference type="EC" id="1.1.1.37" evidence="1"/>
<dbReference type="EMBL" id="CP001182">
    <property type="protein sequence ID" value="ACJ42041.1"/>
    <property type="molecule type" value="Genomic_DNA"/>
</dbReference>
<dbReference type="RefSeq" id="WP_000813006.1">
    <property type="nucleotide sequence ID" value="NC_011586.2"/>
</dbReference>
<dbReference type="SMR" id="B7I9D2"/>
<dbReference type="KEGG" id="abn:AB57_3474"/>
<dbReference type="HOGENOM" id="CLU_040727_2_0_6"/>
<dbReference type="Proteomes" id="UP000007094">
    <property type="component" value="Chromosome"/>
</dbReference>
<dbReference type="GO" id="GO:0030060">
    <property type="term" value="F:L-malate dehydrogenase (NAD+) activity"/>
    <property type="evidence" value="ECO:0007669"/>
    <property type="project" value="UniProtKB-UniRule"/>
</dbReference>
<dbReference type="GO" id="GO:0006108">
    <property type="term" value="P:malate metabolic process"/>
    <property type="evidence" value="ECO:0007669"/>
    <property type="project" value="InterPro"/>
</dbReference>
<dbReference type="GO" id="GO:0006099">
    <property type="term" value="P:tricarboxylic acid cycle"/>
    <property type="evidence" value="ECO:0007669"/>
    <property type="project" value="UniProtKB-UniRule"/>
</dbReference>
<dbReference type="CDD" id="cd01338">
    <property type="entry name" value="MDH_chloroplast-like"/>
    <property type="match status" value="1"/>
</dbReference>
<dbReference type="FunFam" id="3.40.50.720:FF:000010">
    <property type="entry name" value="Malate dehydrogenase"/>
    <property type="match status" value="1"/>
</dbReference>
<dbReference type="FunFam" id="3.90.110.10:FF:000002">
    <property type="entry name" value="Malate dehydrogenase"/>
    <property type="match status" value="1"/>
</dbReference>
<dbReference type="Gene3D" id="3.90.110.10">
    <property type="entry name" value="Lactate dehydrogenase/glycoside hydrolase, family 4, C-terminal"/>
    <property type="match status" value="1"/>
</dbReference>
<dbReference type="Gene3D" id="3.40.50.720">
    <property type="entry name" value="NAD(P)-binding Rossmann-like Domain"/>
    <property type="match status" value="1"/>
</dbReference>
<dbReference type="HAMAP" id="MF_01517">
    <property type="entry name" value="Malate_dehydrog_2"/>
    <property type="match status" value="1"/>
</dbReference>
<dbReference type="InterPro" id="IPR001557">
    <property type="entry name" value="L-lactate/malate_DH"/>
</dbReference>
<dbReference type="InterPro" id="IPR022383">
    <property type="entry name" value="Lactate/malate_DH_C"/>
</dbReference>
<dbReference type="InterPro" id="IPR001236">
    <property type="entry name" value="Lactate/malate_DH_N"/>
</dbReference>
<dbReference type="InterPro" id="IPR015955">
    <property type="entry name" value="Lactate_DH/Glyco_Ohase_4_C"/>
</dbReference>
<dbReference type="InterPro" id="IPR010945">
    <property type="entry name" value="Malate_DH_type2"/>
</dbReference>
<dbReference type="InterPro" id="IPR036291">
    <property type="entry name" value="NAD(P)-bd_dom_sf"/>
</dbReference>
<dbReference type="NCBIfam" id="TIGR01759">
    <property type="entry name" value="MalateDH-SF1"/>
    <property type="match status" value="1"/>
</dbReference>
<dbReference type="NCBIfam" id="NF003916">
    <property type="entry name" value="PRK05442.1"/>
    <property type="match status" value="1"/>
</dbReference>
<dbReference type="PANTHER" id="PTHR23382">
    <property type="entry name" value="MALATE DEHYDROGENASE"/>
    <property type="match status" value="1"/>
</dbReference>
<dbReference type="Pfam" id="PF02866">
    <property type="entry name" value="Ldh_1_C"/>
    <property type="match status" value="1"/>
</dbReference>
<dbReference type="Pfam" id="PF00056">
    <property type="entry name" value="Ldh_1_N"/>
    <property type="match status" value="1"/>
</dbReference>
<dbReference type="PIRSF" id="PIRSF000102">
    <property type="entry name" value="Lac_mal_DH"/>
    <property type="match status" value="1"/>
</dbReference>
<dbReference type="SUPFAM" id="SSF56327">
    <property type="entry name" value="LDH C-terminal domain-like"/>
    <property type="match status" value="1"/>
</dbReference>
<dbReference type="SUPFAM" id="SSF51735">
    <property type="entry name" value="NAD(P)-binding Rossmann-fold domains"/>
    <property type="match status" value="1"/>
</dbReference>
<organism>
    <name type="scientific">Acinetobacter baumannii (strain AB0057)</name>
    <dbReference type="NCBI Taxonomy" id="480119"/>
    <lineage>
        <taxon>Bacteria</taxon>
        <taxon>Pseudomonadati</taxon>
        <taxon>Pseudomonadota</taxon>
        <taxon>Gammaproteobacteria</taxon>
        <taxon>Moraxellales</taxon>
        <taxon>Moraxellaceae</taxon>
        <taxon>Acinetobacter</taxon>
        <taxon>Acinetobacter calcoaceticus/baumannii complex</taxon>
    </lineage>
</organism>
<reference key="1">
    <citation type="journal article" date="2008" name="J. Bacteriol.">
        <title>Comparative genome sequence analysis of multidrug-resistant Acinetobacter baumannii.</title>
        <authorList>
            <person name="Adams M.D."/>
            <person name="Goglin K."/>
            <person name="Molyneaux N."/>
            <person name="Hujer K.M."/>
            <person name="Lavender H."/>
            <person name="Jamison J.J."/>
            <person name="MacDonald I.J."/>
            <person name="Martin K.M."/>
            <person name="Russo T."/>
            <person name="Campagnari A.A."/>
            <person name="Hujer A.M."/>
            <person name="Bonomo R.A."/>
            <person name="Gill S.R."/>
        </authorList>
    </citation>
    <scope>NUCLEOTIDE SEQUENCE [LARGE SCALE GENOMIC DNA]</scope>
    <source>
        <strain>AB0057</strain>
    </source>
</reference>
<accession>B7I9D2</accession>
<proteinExistence type="inferred from homology"/>
<comment type="function">
    <text evidence="1">Catalyzes the reversible oxidation of malate to oxaloacetate.</text>
</comment>
<comment type="catalytic activity">
    <reaction evidence="1">
        <text>(S)-malate + NAD(+) = oxaloacetate + NADH + H(+)</text>
        <dbReference type="Rhea" id="RHEA:21432"/>
        <dbReference type="ChEBI" id="CHEBI:15378"/>
        <dbReference type="ChEBI" id="CHEBI:15589"/>
        <dbReference type="ChEBI" id="CHEBI:16452"/>
        <dbReference type="ChEBI" id="CHEBI:57540"/>
        <dbReference type="ChEBI" id="CHEBI:57945"/>
        <dbReference type="EC" id="1.1.1.37"/>
    </reaction>
</comment>
<comment type="similarity">
    <text evidence="1">Belongs to the LDH/MDH superfamily. MDH type 2 family.</text>
</comment>
<evidence type="ECO:0000255" key="1">
    <source>
        <dbReference type="HAMAP-Rule" id="MF_01517"/>
    </source>
</evidence>